<evidence type="ECO:0000255" key="1"/>
<evidence type="ECO:0000269" key="2">
    <source>
    </source>
</evidence>
<evidence type="ECO:0000269" key="3">
    <source>
    </source>
</evidence>
<evidence type="ECO:0000303" key="4">
    <source>
    </source>
</evidence>
<evidence type="ECO:0000303" key="5">
    <source>
    </source>
</evidence>
<evidence type="ECO:0000305" key="6"/>
<evidence type="ECO:0000305" key="7">
    <source>
    </source>
</evidence>
<gene>
    <name evidence="5" type="ORF">c29772_g1_i1_5</name>
</gene>
<comment type="function">
    <molecule>Xib2a</molecule>
    <text evidence="3">Probable neurotoxin. Moderately inhibits voltage-gated potassium channels (Kv1.1/KCNA1, Kv1.2/KCNA2, Kv1.3/KCNA3, and Kv1.6/KCNA6, with the highest toxicity against Kv1.6 (73.2% inhibition at 1 uM)) and weakly inhibits sodium channels (Nav1.4/SCN4A). Does not activate protein kinase A type II (PKA-II) and MAP kinase Erk1/2 in sensory neurons. Does not show cytotoxic activity. Does not have an impact on Ca2+, cAMP, and NO signaling in the cell types analyzed. Does not interfere with the adhesion of leukocytes to endothelial cells.</text>
</comment>
<comment type="function">
    <molecule>Xib2b</molecule>
    <text evidence="3">Moderately inhibits voltage-gated potassium channels (Kv1.1/KCNA1, Kv1.2/KCNA2, Kv1.3/KCNA3, and Kv1.6/KCNA6, with the highest toxicity against Kv1.6 (75.9% inhibition at 1 uM)). Does not activate protein kinase A type II (PKA-II) and MAP kinase Erk1/2 in sensory neurons. Does not show cytotoxic activity. Does not have an impact on Ca2+, cAMP, and NO signaling in the cell types analyzed. Does not interfere with the adhesion of leukocytes to endothelial cells.</text>
</comment>
<comment type="subcellular location">
    <subcellularLocation>
        <location evidence="7">Secreted</location>
    </subcellularLocation>
</comment>
<comment type="tissue specificity">
    <text evidence="2">Expressed by the venom gland. Not found in the whole body.</text>
</comment>
<comment type="domain">
    <text evidence="6">The presence of a 'disulfide through disulfide knot' structurally defines this protein as a knottin.</text>
</comment>
<comment type="PTM">
    <text evidence="6">Contains 5 disulfide bonds.</text>
</comment>
<comment type="miscellaneous">
    <molecule>Xib2a</molecule>
    <text evidence="3">Negative results: Does not show activity on potassium channels Shaker, Kv1.4/KCNA4, Kv2.1/KCNB1, Kv3.1/KCNC1, Kv4.2/KCND2, Kv10.1/KCNH1/EAG1, Kv11.1/KCNH2/ERG1, sodium channels Nav1.2/SCN2A, Nav1.5/SCN5A, Nav1.6/SCN8A, and BgNav, and calcium channels Cav3.1/CACNA1G, Cav3.2/CACNA1H and Cav3.3/CACNA1I.</text>
</comment>
<comment type="miscellaneous">
    <molecule>Xib2b</molecule>
    <text evidence="3">Negative results: Does not show activity on potassium channels Shaker, Kv1.4/KCNA4, Kv2.1/KCNB1, Kv3.1/KCNC1, Kv4.2/KCND2, Kv10.1/KCNH1/EAG1, Kv11.1/KCNH2/ERG1, sodium channels Nav1.2/SCN2A, Nav1.4/SCN4A, Nav1.5/SCN5A, Nav1.6/SCN8A, and BgNav, and calcium channels Cav3.1/CACNA1G, Cav3.2/CACNA1H and Cav3.3/CACNA1I.</text>
</comment>
<comment type="similarity">
    <text evidence="6">Belongs to the xibalbin-2 family.</text>
</comment>
<comment type="caution">
    <text evidence="7">As the predicted propeptide cleavage site is ambiguous, the two peptides xib2a and xib2b were synthesized and functionnally tested. They are both described in the feature table, even if only one may really exist in nature.</text>
</comment>
<comment type="online information" name="National Center for Biotechnology Information (NCBI)">
    <link uri="https://www.ncbi.nlm.nih.gov/sra/SRX2766574"/>
</comment>
<feature type="signal peptide" evidence="1">
    <location>
        <begin position="1"/>
        <end position="25"/>
    </location>
</feature>
<feature type="propeptide" id="PRO_0000462233" evidence="7">
    <location>
        <begin position="26"/>
        <end position="45"/>
    </location>
</feature>
<feature type="chain" id="PRO_0000462234" description="Xib2a" evidence="7">
    <location>
        <begin position="46"/>
        <end position="87"/>
    </location>
</feature>
<feature type="chain" id="PRO_0000462235" description="Xib2b" evidence="7">
    <location>
        <begin position="51"/>
        <end position="87"/>
    </location>
</feature>
<accession>P0DRI7</accession>
<proteinExistence type="evidence at transcript level"/>
<name>XIB2_XIBTU</name>
<sequence>MKGVCTRKVLYFFMAVILFVAIVASEDTENRNPAMAMPLQRMEQEVEKVSSRCGPVACPGRFCGSDLGACRPPWCCRGCSCSFCCKL</sequence>
<reference key="1">
    <citation type="journal article" date="2017" name="Toxins">
        <title>Venomics of remipede crustaceans reveals novel peptide diversity and illuminates the venom's biological role.</title>
        <authorList>
            <person name="von Reumont B.M."/>
            <person name="Undheim E.A.B."/>
            <person name="Jauss R.T."/>
            <person name="Jenner R.A."/>
        </authorList>
    </citation>
    <scope>NUCLEOTIDE SEQUENCE [LARGE SCALE MRNA]</scope>
    <scope>TISSUE SPECIFICITY</scope>
    <source>
        <tissue>Venom gland</tissue>
    </source>
</reference>
<reference key="2">
    <citation type="journal article" date="2024" name="BMC Biol.">
        <title>Diversely evolved xibalbin variants from remipede venom inhibit potassium channels and activate PKA-II and Erk1/2 signaling.</title>
        <authorList>
            <person name="Pinheiro-Junior E.L."/>
            <person name="Alirahimi E."/>
            <person name="Peigneur S."/>
            <person name="Isensee J."/>
            <person name="Schiffmann S."/>
            <person name="Erkoc P."/>
            <person name="Fuerst R."/>
            <person name="Vilcinskas A."/>
            <person name="Sennoner T."/>
            <person name="Koludarov I."/>
            <person name="Hempel B.F."/>
            <person name="Tytgat J."/>
            <person name="Hucho T."/>
            <person name="von Reumont B.M."/>
        </authorList>
    </citation>
    <scope>FUNCTION</scope>
    <scope>SYNTHESIS OF 46-87 AND 51-87</scope>
</reference>
<keyword id="KW-1015">Disulfide bond</keyword>
<keyword id="KW-0872">Ion channel impairing toxin</keyword>
<keyword id="KW-0960">Knottin</keyword>
<keyword id="KW-0528">Neurotoxin</keyword>
<keyword id="KW-0632">Potassium channel impairing toxin</keyword>
<keyword id="KW-0964">Secreted</keyword>
<keyword id="KW-0732">Signal</keyword>
<keyword id="KW-0800">Toxin</keyword>
<keyword id="KW-1220">Voltage-gated potassium channel impairing toxin</keyword>
<keyword id="KW-0738">Voltage-gated sodium channel impairing toxin</keyword>
<protein>
    <recommendedName>
        <fullName evidence="4 5">Xibalbin-2</fullName>
        <shortName evidence="5">Xib2</shortName>
    </recommendedName>
    <alternativeName>
        <fullName evidence="6">Kappa-speleotoxin(2)-Xt1a</fullName>
        <shortName evidence="6">Kappa-SLTX(2)-Xt1a</shortName>
    </alternativeName>
    <component>
        <recommendedName>
            <fullName evidence="5">Xib2a</fullName>
        </recommendedName>
    </component>
    <component>
        <recommendedName>
            <fullName evidence="5">Xib2b</fullName>
        </recommendedName>
    </component>
</protein>
<organism>
    <name type="scientific">Xibalbanus tulumensis</name>
    <name type="common">Blind cave remipede</name>
    <name type="synonym">Speleonectes tulumensis</name>
    <dbReference type="NCBI Taxonomy" id="1519145"/>
    <lineage>
        <taxon>Eukaryota</taxon>
        <taxon>Metazoa</taxon>
        <taxon>Ecdysozoa</taxon>
        <taxon>Arthropoda</taxon>
        <taxon>Crustacea</taxon>
        <taxon>Remipedia</taxon>
        <taxon>Nectiopoda</taxon>
        <taxon>Speleonectidae</taxon>
        <taxon>Xibalbanus</taxon>
    </lineage>
</organism>